<proteinExistence type="inferred from homology"/>
<gene>
    <name evidence="1" type="primary">rplC</name>
    <name type="ordered locus">AAur_2948</name>
</gene>
<accession>A1R8U5</accession>
<dbReference type="EMBL" id="CP000474">
    <property type="protein sequence ID" value="ABM09075.1"/>
    <property type="molecule type" value="Genomic_DNA"/>
</dbReference>
<dbReference type="RefSeq" id="WP_011775595.1">
    <property type="nucleotide sequence ID" value="NC_008711.1"/>
</dbReference>
<dbReference type="SMR" id="A1R8U5"/>
<dbReference type="STRING" id="290340.AAur_2948"/>
<dbReference type="GeneID" id="97301792"/>
<dbReference type="KEGG" id="aau:AAur_2948"/>
<dbReference type="eggNOG" id="COG0087">
    <property type="taxonomic scope" value="Bacteria"/>
</dbReference>
<dbReference type="HOGENOM" id="CLU_044142_4_1_11"/>
<dbReference type="OrthoDB" id="9806135at2"/>
<dbReference type="Proteomes" id="UP000000637">
    <property type="component" value="Chromosome"/>
</dbReference>
<dbReference type="GO" id="GO:0022625">
    <property type="term" value="C:cytosolic large ribosomal subunit"/>
    <property type="evidence" value="ECO:0007669"/>
    <property type="project" value="TreeGrafter"/>
</dbReference>
<dbReference type="GO" id="GO:0019843">
    <property type="term" value="F:rRNA binding"/>
    <property type="evidence" value="ECO:0007669"/>
    <property type="project" value="UniProtKB-UniRule"/>
</dbReference>
<dbReference type="GO" id="GO:0003735">
    <property type="term" value="F:structural constituent of ribosome"/>
    <property type="evidence" value="ECO:0007669"/>
    <property type="project" value="InterPro"/>
</dbReference>
<dbReference type="GO" id="GO:0006412">
    <property type="term" value="P:translation"/>
    <property type="evidence" value="ECO:0007669"/>
    <property type="project" value="UniProtKB-UniRule"/>
</dbReference>
<dbReference type="FunFam" id="2.40.30.10:FF:000004">
    <property type="entry name" value="50S ribosomal protein L3"/>
    <property type="match status" value="1"/>
</dbReference>
<dbReference type="FunFam" id="3.30.160.810:FF:000001">
    <property type="entry name" value="50S ribosomal protein L3"/>
    <property type="match status" value="1"/>
</dbReference>
<dbReference type="Gene3D" id="3.30.160.810">
    <property type="match status" value="1"/>
</dbReference>
<dbReference type="Gene3D" id="2.40.30.10">
    <property type="entry name" value="Translation factors"/>
    <property type="match status" value="1"/>
</dbReference>
<dbReference type="HAMAP" id="MF_01325_B">
    <property type="entry name" value="Ribosomal_uL3_B"/>
    <property type="match status" value="1"/>
</dbReference>
<dbReference type="InterPro" id="IPR000597">
    <property type="entry name" value="Ribosomal_uL3"/>
</dbReference>
<dbReference type="InterPro" id="IPR019927">
    <property type="entry name" value="Ribosomal_uL3_bac/org-type"/>
</dbReference>
<dbReference type="InterPro" id="IPR019926">
    <property type="entry name" value="Ribosomal_uL3_CS"/>
</dbReference>
<dbReference type="InterPro" id="IPR009000">
    <property type="entry name" value="Transl_B-barrel_sf"/>
</dbReference>
<dbReference type="NCBIfam" id="TIGR03625">
    <property type="entry name" value="L3_bact"/>
    <property type="match status" value="1"/>
</dbReference>
<dbReference type="PANTHER" id="PTHR11229">
    <property type="entry name" value="50S RIBOSOMAL PROTEIN L3"/>
    <property type="match status" value="1"/>
</dbReference>
<dbReference type="PANTHER" id="PTHR11229:SF16">
    <property type="entry name" value="LARGE RIBOSOMAL SUBUNIT PROTEIN UL3C"/>
    <property type="match status" value="1"/>
</dbReference>
<dbReference type="Pfam" id="PF00297">
    <property type="entry name" value="Ribosomal_L3"/>
    <property type="match status" value="1"/>
</dbReference>
<dbReference type="SUPFAM" id="SSF50447">
    <property type="entry name" value="Translation proteins"/>
    <property type="match status" value="1"/>
</dbReference>
<dbReference type="PROSITE" id="PS00474">
    <property type="entry name" value="RIBOSOMAL_L3"/>
    <property type="match status" value="1"/>
</dbReference>
<comment type="function">
    <text evidence="1">One of the primary rRNA binding proteins, it binds directly near the 3'-end of the 23S rRNA, where it nucleates assembly of the 50S subunit.</text>
</comment>
<comment type="subunit">
    <text evidence="1">Part of the 50S ribosomal subunit. Forms a cluster with proteins L14 and L19.</text>
</comment>
<comment type="similarity">
    <text evidence="1">Belongs to the universal ribosomal protein uL3 family.</text>
</comment>
<keyword id="KW-0687">Ribonucleoprotein</keyword>
<keyword id="KW-0689">Ribosomal protein</keyword>
<keyword id="KW-0694">RNA-binding</keyword>
<keyword id="KW-0699">rRNA-binding</keyword>
<evidence type="ECO:0000255" key="1">
    <source>
        <dbReference type="HAMAP-Rule" id="MF_01325"/>
    </source>
</evidence>
<evidence type="ECO:0000256" key="2">
    <source>
        <dbReference type="SAM" id="MobiDB-lite"/>
    </source>
</evidence>
<evidence type="ECO:0000305" key="3"/>
<reference key="1">
    <citation type="journal article" date="2006" name="PLoS Genet.">
        <title>Secrets of soil survival revealed by the genome sequence of Arthrobacter aurescens TC1.</title>
        <authorList>
            <person name="Mongodin E.F."/>
            <person name="Shapir N."/>
            <person name="Daugherty S.C."/>
            <person name="DeBoy R.T."/>
            <person name="Emerson J.B."/>
            <person name="Shvartzbeyn A."/>
            <person name="Radune D."/>
            <person name="Vamathevan J."/>
            <person name="Riggs F."/>
            <person name="Grinberg V."/>
            <person name="Khouri H.M."/>
            <person name="Wackett L.P."/>
            <person name="Nelson K.E."/>
            <person name="Sadowsky M.J."/>
        </authorList>
    </citation>
    <scope>NUCLEOTIDE SEQUENCE [LARGE SCALE GENOMIC DNA]</scope>
    <source>
        <strain>TC1</strain>
    </source>
</reference>
<sequence length="216" mass="22898">MTATRNVKGLLGTKLGMTQVWDENNKLIPVTVVQADSNVITQLRNAEVDGYVAVQIGYGQIDPRKVTKPLAGHFEKAGVTPRRHVVELRTADAASYELGQELSVEIFEAGQKIDVVGTSKGKGFAGVMKRHGFHGVGASHGAHKNHRKPGSIGGASTPSRVFKGLKMAGRMGAERHTTLNLTVHAIDAEKSLLLIKGAVPGARGQVVLVRTAVKGA</sequence>
<name>RL3_PAEAT</name>
<protein>
    <recommendedName>
        <fullName evidence="1">Large ribosomal subunit protein uL3</fullName>
    </recommendedName>
    <alternativeName>
        <fullName evidence="3">50S ribosomal protein L3</fullName>
    </alternativeName>
</protein>
<organism>
    <name type="scientific">Paenarthrobacter aurescens (strain TC1)</name>
    <dbReference type="NCBI Taxonomy" id="290340"/>
    <lineage>
        <taxon>Bacteria</taxon>
        <taxon>Bacillati</taxon>
        <taxon>Actinomycetota</taxon>
        <taxon>Actinomycetes</taxon>
        <taxon>Micrococcales</taxon>
        <taxon>Micrococcaceae</taxon>
        <taxon>Paenarthrobacter</taxon>
    </lineage>
</organism>
<feature type="chain" id="PRO_1000073247" description="Large ribosomal subunit protein uL3">
    <location>
        <begin position="1"/>
        <end position="216"/>
    </location>
</feature>
<feature type="region of interest" description="Disordered" evidence="2">
    <location>
        <begin position="137"/>
        <end position="157"/>
    </location>
</feature>